<keyword id="KW-0165">Cleavage on pair of basic residues</keyword>
<keyword id="KW-0204">Cytolysis</keyword>
<keyword id="KW-0903">Direct protein sequencing</keyword>
<keyword id="KW-0406">Ion transport</keyword>
<keyword id="KW-0472">Membrane</keyword>
<keyword id="KW-0166">Nematocyst</keyword>
<keyword id="KW-1185">Reference proteome</keyword>
<keyword id="KW-0964">Secreted</keyword>
<keyword id="KW-0732">Signal</keyword>
<keyword id="KW-1052">Target cell membrane</keyword>
<keyword id="KW-1053">Target membrane</keyword>
<keyword id="KW-0800">Toxin</keyword>
<keyword id="KW-0812">Transmembrane</keyword>
<keyword id="KW-0813">Transport</keyword>
<dbReference type="PIR" id="S11325">
    <property type="entry name" value="A33104"/>
</dbReference>
<dbReference type="RefSeq" id="XP_031550741.1">
    <property type="nucleotide sequence ID" value="XM_031694881.1"/>
</dbReference>
<dbReference type="RefSeq" id="XP_031550742.1">
    <property type="nucleotide sequence ID" value="XM_031694882.1"/>
</dbReference>
<dbReference type="BMRB" id="P61915"/>
<dbReference type="SMR" id="P61915"/>
<dbReference type="TCDB" id="1.C.38.1.1">
    <property type="family name" value="the pore-forming equinatoxin (equinatoxin) family"/>
</dbReference>
<dbReference type="EnsemblMetazoa" id="XM_031694881.1">
    <property type="protein sequence ID" value="XP_031550741.1"/>
    <property type="gene ID" value="LOC116288141"/>
</dbReference>
<dbReference type="EnsemblMetazoa" id="XM_031694882.1">
    <property type="protein sequence ID" value="XP_031550742.1"/>
    <property type="gene ID" value="LOC116288141"/>
</dbReference>
<dbReference type="GeneID" id="116288141"/>
<dbReference type="InParanoid" id="P61915"/>
<dbReference type="OrthoDB" id="5954752at2759"/>
<dbReference type="Proteomes" id="UP000515163">
    <property type="component" value="Unplaced"/>
</dbReference>
<dbReference type="GO" id="GO:0005576">
    <property type="term" value="C:extracellular region"/>
    <property type="evidence" value="ECO:0007669"/>
    <property type="project" value="UniProtKB-SubCell"/>
</dbReference>
<dbReference type="GO" id="GO:0042151">
    <property type="term" value="C:nematocyst"/>
    <property type="evidence" value="ECO:0007669"/>
    <property type="project" value="UniProtKB-SubCell"/>
</dbReference>
<dbReference type="GO" id="GO:0044218">
    <property type="term" value="C:other organism cell membrane"/>
    <property type="evidence" value="ECO:0007669"/>
    <property type="project" value="UniProtKB-KW"/>
</dbReference>
<dbReference type="GO" id="GO:0046930">
    <property type="term" value="C:pore complex"/>
    <property type="evidence" value="ECO:0007669"/>
    <property type="project" value="InterPro"/>
</dbReference>
<dbReference type="GO" id="GO:0015267">
    <property type="term" value="F:channel activity"/>
    <property type="evidence" value="ECO:0007669"/>
    <property type="project" value="InterPro"/>
</dbReference>
<dbReference type="GO" id="GO:0090729">
    <property type="term" value="F:toxin activity"/>
    <property type="evidence" value="ECO:0007669"/>
    <property type="project" value="UniProtKB-KW"/>
</dbReference>
<dbReference type="GO" id="GO:0051715">
    <property type="term" value="P:cytolysis in another organism"/>
    <property type="evidence" value="ECO:0007669"/>
    <property type="project" value="InterPro"/>
</dbReference>
<dbReference type="GO" id="GO:0006812">
    <property type="term" value="P:monoatomic cation transport"/>
    <property type="evidence" value="ECO:0007669"/>
    <property type="project" value="InterPro"/>
</dbReference>
<dbReference type="GO" id="GO:0046931">
    <property type="term" value="P:pore complex assembly"/>
    <property type="evidence" value="ECO:0007669"/>
    <property type="project" value="InterPro"/>
</dbReference>
<dbReference type="FunFam" id="2.60.270.20:FF:000001">
    <property type="entry name" value="DELTA-actitoxin-Afr1a"/>
    <property type="match status" value="1"/>
</dbReference>
<dbReference type="Gene3D" id="2.60.270.20">
    <property type="entry name" value="Cytolysin/lectin"/>
    <property type="match status" value="1"/>
</dbReference>
<dbReference type="InterPro" id="IPR050677">
    <property type="entry name" value="Actinoporin_PFT"/>
</dbReference>
<dbReference type="InterPro" id="IPR009104">
    <property type="entry name" value="Anemon_actinoporin-like"/>
</dbReference>
<dbReference type="InterPro" id="IPR015926">
    <property type="entry name" value="Cytolysin/lectin"/>
</dbReference>
<dbReference type="PANTHER" id="PTHR40388">
    <property type="entry name" value="BRYOPORIN"/>
    <property type="match status" value="1"/>
</dbReference>
<dbReference type="PANTHER" id="PTHR40388:SF1">
    <property type="entry name" value="BRYOPORIN"/>
    <property type="match status" value="1"/>
</dbReference>
<dbReference type="Pfam" id="PF06369">
    <property type="entry name" value="Anemone_cytotox"/>
    <property type="match status" value="1"/>
</dbReference>
<dbReference type="SUPFAM" id="SSF63724">
    <property type="entry name" value="Cytolysin/lectin"/>
    <property type="match status" value="1"/>
</dbReference>
<organism>
    <name type="scientific">Actinia tenebrosa</name>
    <name type="common">Australian red waratah sea anemone</name>
    <dbReference type="NCBI Taxonomy" id="6105"/>
    <lineage>
        <taxon>Eukaryota</taxon>
        <taxon>Metazoa</taxon>
        <taxon>Cnidaria</taxon>
        <taxon>Anthozoa</taxon>
        <taxon>Hexacorallia</taxon>
        <taxon>Actiniaria</taxon>
        <taxon>Actiniidae</taxon>
        <taxon>Actinia</taxon>
    </lineage>
</organism>
<comment type="function">
    <text>Pore-forming protein that forms cations-selective hydrophilic pores of around 1 nm and causes cardiac stimulation and cytolysis. Pore formation is a multi-step process that involves specific recognition of membrane sphingomyelin (but neither cholesterol nor phosphatidylcholine) using aromatic rich region and adjacent phosphocholine (POC) binding site, firm binding to the membrane (mainly driven by hydrophobic interactions) accompanied by the transfer of the N-terminal region to the lipid-water interface and finally pore formation after oligomerization of monomers.</text>
</comment>
<comment type="subunit">
    <text evidence="1">Octamer or nonamer in membranes. Monomer in the soluble state.</text>
</comment>
<comment type="subcellular location">
    <subcellularLocation>
        <location evidence="1">Secreted</location>
    </subcellularLocation>
    <subcellularLocation>
        <location evidence="2">Nematocyst</location>
    </subcellularLocation>
    <subcellularLocation>
        <location evidence="1">Target cell membrane</location>
    </subcellularLocation>
    <text evidence="1">Forms an alpha-helical membrane channel in the prey.</text>
</comment>
<comment type="domain">
    <text evidence="3">Composed of a long N-terminal alpha-helix and a core region rich in beta-sheet structures. Before the pore formation, the alpha-helix binds the lipid membrane, partitions into the lipid-water interface and stabilizes the monomeric molecule on the membrane. Finally, it traverses the bilayer, thus forming the transmembrane pore.</text>
</comment>
<comment type="similarity">
    <text evidence="8">Belongs to the actinoporin family. Sea anemone subfamily.</text>
</comment>
<proteinExistence type="evidence at protein level"/>
<protein>
    <recommendedName>
        <fullName evidence="7">DELTA-actitoxin-Ate1a</fullName>
        <shortName evidence="7">DELTA-AITX-Ate1a</shortName>
    </recommendedName>
    <alternativeName>
        <fullName evidence="6">Cytolysin tenebrosin-C</fullName>
    </alternativeName>
</protein>
<reference evidence="11" key="1">
    <citation type="journal article" date="2019" name="Ecol. Evol.">
        <title>The draft genome of Actinia tenebrosa reveals insights into toxin evolution.</title>
        <authorList>
            <person name="Surm J.M."/>
            <person name="Stewart Z.K."/>
            <person name="Papanicolaou A."/>
            <person name="Pavasovic A."/>
            <person name="Prentis P.J."/>
        </authorList>
    </citation>
    <scope>NUCLEOTIDE SEQUENCE [LARGE SCALE GENOMIC DNA]</scope>
</reference>
<reference key="2">
    <citation type="journal article" date="1990" name="Eur. J. Biochem.">
        <title>Complete amino acid sequence of tenebrosin-C, a cardiac stimulatory and haemolytic protein from the sea anemone Actinia tenebrosa.</title>
        <authorList>
            <person name="Simpson R.J."/>
            <person name="Reid G.E."/>
            <person name="Moritz R.L."/>
            <person name="Morton C."/>
            <person name="Norton R.S."/>
        </authorList>
    </citation>
    <scope>PROTEIN SEQUENCE OF 36-214</scope>
</reference>
<reference key="3">
    <citation type="journal article" date="1990" name="Toxicon">
        <title>Purification and characterisation of proteins with cardiac stimulatory and haemolytic activity from the anemone Actinia tenebrosa.</title>
        <authorList>
            <person name="Norton R.S."/>
            <person name="Bobek G."/>
            <person name="Ivanov J.O."/>
            <person name="Thomson M."/>
            <person name="Fiala-Beer E."/>
            <person name="Moritz R.L."/>
            <person name="Simpson R.J."/>
        </authorList>
    </citation>
    <scope>PROTEIN SEQUENCE OF 36-55</scope>
</reference>
<reference key="4">
    <citation type="journal article" date="2009" name="Toxicon">
        <title>Molecular mechanism of pore formation by actinoporins.</title>
        <authorList>
            <person name="Kristan K.C."/>
            <person name="Viero G."/>
            <person name="Dalla Serra M."/>
            <person name="Macek P."/>
            <person name="Anderluh G."/>
        </authorList>
    </citation>
    <scope>REVIEW</scope>
</reference>
<reference key="5">
    <citation type="journal article" date="2012" name="Toxicon">
        <title>Development of a rational nomenclature for naming peptide and protein toxins from sea anemones.</title>
        <authorList>
            <person name="Oliveira J.S."/>
            <person name="Fuentes-Silva D."/>
            <person name="King G.F."/>
        </authorList>
    </citation>
    <scope>NOMENCLATURE</scope>
</reference>
<sequence length="214" mass="23796">MSRLIIVFIVVTMICSATALPSKKIIDEDEEDEKRSADVAGAVIDGASLSFDILKTVLEALGNVKRKIAVGVDNESGKTWTALNTYFRSGTSDIVLPHKVPHGKALLYNGQKDRGPVATGAVGVLAYLMSDGNTLAVLFSVPYDYNWYSNWWNVRIYKGKRRADQRMYEELYYNLSPFRGDNGWHTRNLGYGLKSRGFMNSSGHAILEIHVSKA</sequence>
<name>ACTPC_ACTTE</name>
<accession>P61915</accession>
<accession>A0A6P8HDM5</accession>
<accession>P17723</accession>
<accession>Q16993</accession>
<accession>Q9TWV2</accession>
<accession>Q9TWV3</accession>
<evidence type="ECO:0000250" key="1">
    <source>
        <dbReference type="UniProtKB" id="B9W5G6"/>
    </source>
</evidence>
<evidence type="ECO:0000250" key="2">
    <source>
        <dbReference type="UniProtKB" id="P07845"/>
    </source>
</evidence>
<evidence type="ECO:0000250" key="3">
    <source>
        <dbReference type="UniProtKB" id="P61914"/>
    </source>
</evidence>
<evidence type="ECO:0000255" key="4"/>
<evidence type="ECO:0000269" key="5">
    <source>
    </source>
</evidence>
<evidence type="ECO:0000303" key="6">
    <source>
    </source>
</evidence>
<evidence type="ECO:0000303" key="7">
    <source>
    </source>
</evidence>
<evidence type="ECO:0000305" key="8"/>
<evidence type="ECO:0000305" key="9">
    <source>
    </source>
</evidence>
<evidence type="ECO:0000305" key="10">
    <source>
    </source>
</evidence>
<evidence type="ECO:0000312" key="11">
    <source>
        <dbReference type="Proteomes" id="UP000515163"/>
    </source>
</evidence>
<feature type="signal peptide" evidence="4">
    <location>
        <begin position="1"/>
        <end position="19"/>
    </location>
</feature>
<feature type="propeptide" id="PRO_0000452709" evidence="9 10">
    <location>
        <begin position="20"/>
        <end position="35"/>
    </location>
</feature>
<feature type="chain" id="PRO_0000221532" description="DELTA-actitoxin-Ate1a" evidence="5">
    <location>
        <begin position="36"/>
        <end position="214"/>
    </location>
</feature>
<feature type="region of interest" description="Plays an important role in the hemolytic activity" evidence="2">
    <location>
        <begin position="38"/>
        <end position="47"/>
    </location>
</feature>
<feature type="region of interest" description="N-terminal region" evidence="3">
    <location>
        <begin position="46"/>
        <end position="65"/>
    </location>
</feature>
<feature type="region of interest" description="Trp-rich region, which is important for the binding to lipid membrane" evidence="3">
    <location>
        <begin position="140"/>
        <end position="155"/>
    </location>
</feature>
<feature type="short sequence motif" description="Cell attachment site, crucial for protein stability" evidence="2 4">
    <location>
        <begin position="179"/>
        <end position="181"/>
    </location>
</feature>
<feature type="binding site" evidence="2">
    <location>
        <position position="89"/>
    </location>
    <ligand>
        <name>phosphocholine</name>
        <dbReference type="ChEBI" id="CHEBI:295975"/>
    </ligand>
</feature>
<feature type="binding site" evidence="2">
    <location>
        <position position="122"/>
    </location>
    <ligand>
        <name>phosphocholine</name>
        <dbReference type="ChEBI" id="CHEBI:295975"/>
    </ligand>
</feature>
<feature type="binding site" evidence="2">
    <location>
        <position position="140"/>
    </location>
    <ligand>
        <name>phosphocholine</name>
        <dbReference type="ChEBI" id="CHEBI:295975"/>
    </ligand>
</feature>
<feature type="binding site" evidence="2">
    <location>
        <position position="142"/>
    </location>
    <ligand>
        <name>phosphocholine</name>
        <dbReference type="ChEBI" id="CHEBI:295975"/>
    </ligand>
</feature>
<feature type="binding site" evidence="2">
    <location>
        <position position="168"/>
    </location>
    <ligand>
        <name>phosphocholine</name>
        <dbReference type="ChEBI" id="CHEBI:295975"/>
    </ligand>
</feature>
<feature type="binding site" evidence="2">
    <location>
        <position position="172"/>
    </location>
    <ligand>
        <name>phosphocholine</name>
        <dbReference type="ChEBI" id="CHEBI:295975"/>
    </ligand>
</feature>
<feature type="binding site" evidence="2">
    <location>
        <position position="173"/>
    </location>
    <ligand>
        <name>phosphocholine</name>
        <dbReference type="ChEBI" id="CHEBI:295975"/>
    </ligand>
</feature>
<feature type="site" description="Important in the initial contact with the lipid membrane" evidence="3">
    <location>
        <position position="147"/>
    </location>
</feature>
<feature type="site" description="Important in the initial contact with the lipid membrane" evidence="3">
    <location>
        <position position="148"/>
    </location>
</feature>
<feature type="site" description="Interacts with the lipid membrane" evidence="3">
    <location>
        <position position="179"/>
    </location>
</feature>
<feature type="site" description="Interacts with the lipid membrane" evidence="3">
    <location>
        <position position="195"/>
    </location>
</feature>
<feature type="sequence variant">
    <original>S</original>
    <variation>T</variation>
    <location>
        <position position="202"/>
    </location>
</feature>